<organism>
    <name type="scientific">Campylobacter hominis (strain ATCC BAA-381 / DSM 21671 / CCUG 45161 / LMG 19568 / NCTC 13146 / CH001A)</name>
    <dbReference type="NCBI Taxonomy" id="360107"/>
    <lineage>
        <taxon>Bacteria</taxon>
        <taxon>Pseudomonadati</taxon>
        <taxon>Campylobacterota</taxon>
        <taxon>Epsilonproteobacteria</taxon>
        <taxon>Campylobacterales</taxon>
        <taxon>Campylobacteraceae</taxon>
        <taxon>Campylobacter</taxon>
    </lineage>
</organism>
<protein>
    <recommendedName>
        <fullName evidence="1">Lysine--tRNA ligase</fullName>
        <ecNumber evidence="1">6.1.1.6</ecNumber>
    </recommendedName>
    <alternativeName>
        <fullName evidence="1">Lysyl-tRNA synthetase</fullName>
        <shortName evidence="1">LysRS</shortName>
    </alternativeName>
</protein>
<accession>A7I3S8</accession>
<sequence>MFENQLEIQRIQKADELRNLGVNPYPHFLKKDMNIKEFREKFAYIAENETKKADEEIVISGRIKLKRVAGRSTFANIEDESGNVQIYYSKDSIGEENYLKFKKNIEVGDIILVKGYAFLTGTGEFSIHVSDLILASKAISILPEKFHGLADKELRYRQRYLDMIMDPSVRVDFEKRSLIVRTIRRFFEDRGFLEVETPMMHQIAGGANAKPFITHHNALDIDRYLKIAPELYLKRLVVGGMNSVFEMNRCFRNEGMDLTHNPEFTSIEFYWAWHNYFEAMDLTEELFNELLKTLNLGEILDYGNLKIDFSKKFQRIKYLDALVLIGEISPEIIKDKDEILKKLKSDGFEANEKLDLGHLQAELFDNYVESKLINPTFITDFPVSISPLSRRSDKDPEIAERFELYIAGKELANAFNELNDPLDQYERFKAQIEAKKAGDDEAHEMDEDYVRALSYAMPPTVGWGLGVDRLVMILLNKASIRDVILFPAMKPIKNLDDKE</sequence>
<name>SYK_CAMHC</name>
<dbReference type="EC" id="6.1.1.6" evidence="1"/>
<dbReference type="EMBL" id="CP000776">
    <property type="protein sequence ID" value="ABS51227.1"/>
    <property type="molecule type" value="Genomic_DNA"/>
</dbReference>
<dbReference type="RefSeq" id="WP_012109475.1">
    <property type="nucleotide sequence ID" value="NC_009714.1"/>
</dbReference>
<dbReference type="SMR" id="A7I3S8"/>
<dbReference type="STRING" id="360107.CHAB381_1646"/>
<dbReference type="KEGG" id="cha:CHAB381_1646"/>
<dbReference type="eggNOG" id="COG1190">
    <property type="taxonomic scope" value="Bacteria"/>
</dbReference>
<dbReference type="HOGENOM" id="CLU_008255_6_0_7"/>
<dbReference type="Proteomes" id="UP000002407">
    <property type="component" value="Chromosome"/>
</dbReference>
<dbReference type="GO" id="GO:0005829">
    <property type="term" value="C:cytosol"/>
    <property type="evidence" value="ECO:0007669"/>
    <property type="project" value="TreeGrafter"/>
</dbReference>
<dbReference type="GO" id="GO:0005524">
    <property type="term" value="F:ATP binding"/>
    <property type="evidence" value="ECO:0007669"/>
    <property type="project" value="UniProtKB-UniRule"/>
</dbReference>
<dbReference type="GO" id="GO:0004824">
    <property type="term" value="F:lysine-tRNA ligase activity"/>
    <property type="evidence" value="ECO:0007669"/>
    <property type="project" value="UniProtKB-UniRule"/>
</dbReference>
<dbReference type="GO" id="GO:0000287">
    <property type="term" value="F:magnesium ion binding"/>
    <property type="evidence" value="ECO:0007669"/>
    <property type="project" value="UniProtKB-UniRule"/>
</dbReference>
<dbReference type="GO" id="GO:0000049">
    <property type="term" value="F:tRNA binding"/>
    <property type="evidence" value="ECO:0007669"/>
    <property type="project" value="TreeGrafter"/>
</dbReference>
<dbReference type="GO" id="GO:0006430">
    <property type="term" value="P:lysyl-tRNA aminoacylation"/>
    <property type="evidence" value="ECO:0007669"/>
    <property type="project" value="UniProtKB-UniRule"/>
</dbReference>
<dbReference type="CDD" id="cd00775">
    <property type="entry name" value="LysRS_core"/>
    <property type="match status" value="1"/>
</dbReference>
<dbReference type="CDD" id="cd04322">
    <property type="entry name" value="LysRS_N"/>
    <property type="match status" value="1"/>
</dbReference>
<dbReference type="Gene3D" id="3.30.930.10">
    <property type="entry name" value="Bira Bifunctional Protein, Domain 2"/>
    <property type="match status" value="1"/>
</dbReference>
<dbReference type="Gene3D" id="2.40.50.140">
    <property type="entry name" value="Nucleic acid-binding proteins"/>
    <property type="match status" value="1"/>
</dbReference>
<dbReference type="HAMAP" id="MF_00252">
    <property type="entry name" value="Lys_tRNA_synth_class2"/>
    <property type="match status" value="1"/>
</dbReference>
<dbReference type="InterPro" id="IPR004364">
    <property type="entry name" value="Aa-tRNA-synt_II"/>
</dbReference>
<dbReference type="InterPro" id="IPR006195">
    <property type="entry name" value="aa-tRNA-synth_II"/>
</dbReference>
<dbReference type="InterPro" id="IPR045864">
    <property type="entry name" value="aa-tRNA-synth_II/BPL/LPL"/>
</dbReference>
<dbReference type="InterPro" id="IPR002313">
    <property type="entry name" value="Lys-tRNA-ligase_II"/>
</dbReference>
<dbReference type="InterPro" id="IPR044136">
    <property type="entry name" value="Lys-tRNA-ligase_II_N"/>
</dbReference>
<dbReference type="InterPro" id="IPR018149">
    <property type="entry name" value="Lys-tRNA-synth_II_C"/>
</dbReference>
<dbReference type="InterPro" id="IPR012340">
    <property type="entry name" value="NA-bd_OB-fold"/>
</dbReference>
<dbReference type="InterPro" id="IPR004365">
    <property type="entry name" value="NA-bd_OB_tRNA"/>
</dbReference>
<dbReference type="NCBIfam" id="TIGR00499">
    <property type="entry name" value="lysS_bact"/>
    <property type="match status" value="1"/>
</dbReference>
<dbReference type="NCBIfam" id="NF001756">
    <property type="entry name" value="PRK00484.1"/>
    <property type="match status" value="1"/>
</dbReference>
<dbReference type="PANTHER" id="PTHR42918:SF15">
    <property type="entry name" value="LYSINE--TRNA LIGASE, CHLOROPLASTIC_MITOCHONDRIAL"/>
    <property type="match status" value="1"/>
</dbReference>
<dbReference type="PANTHER" id="PTHR42918">
    <property type="entry name" value="LYSYL-TRNA SYNTHETASE"/>
    <property type="match status" value="1"/>
</dbReference>
<dbReference type="Pfam" id="PF00152">
    <property type="entry name" value="tRNA-synt_2"/>
    <property type="match status" value="1"/>
</dbReference>
<dbReference type="Pfam" id="PF01336">
    <property type="entry name" value="tRNA_anti-codon"/>
    <property type="match status" value="1"/>
</dbReference>
<dbReference type="PRINTS" id="PR00982">
    <property type="entry name" value="TRNASYNTHLYS"/>
</dbReference>
<dbReference type="SUPFAM" id="SSF55681">
    <property type="entry name" value="Class II aaRS and biotin synthetases"/>
    <property type="match status" value="1"/>
</dbReference>
<dbReference type="SUPFAM" id="SSF50249">
    <property type="entry name" value="Nucleic acid-binding proteins"/>
    <property type="match status" value="1"/>
</dbReference>
<dbReference type="PROSITE" id="PS50862">
    <property type="entry name" value="AA_TRNA_LIGASE_II"/>
    <property type="match status" value="1"/>
</dbReference>
<proteinExistence type="inferred from homology"/>
<reference key="1">
    <citation type="submission" date="2007-07" db="EMBL/GenBank/DDBJ databases">
        <title>Complete genome sequence of Campylobacter hominis ATCC BAA-381, a commensal isolated from the human gastrointestinal tract.</title>
        <authorList>
            <person name="Fouts D.E."/>
            <person name="Mongodin E.F."/>
            <person name="Puiu D."/>
            <person name="Sebastian Y."/>
            <person name="Miller W.G."/>
            <person name="Mandrell R.E."/>
            <person name="Nelson K.E."/>
        </authorList>
    </citation>
    <scope>NUCLEOTIDE SEQUENCE [LARGE SCALE GENOMIC DNA]</scope>
    <source>
        <strain>ATCC BAA-381 / DSM 21671 / CCUG 45161 / LMG 19568 / NCTC 13146 / CH001A</strain>
    </source>
</reference>
<gene>
    <name evidence="1" type="primary">lysS</name>
    <name type="ordered locus">CHAB381_1646</name>
</gene>
<evidence type="ECO:0000255" key="1">
    <source>
        <dbReference type="HAMAP-Rule" id="MF_00252"/>
    </source>
</evidence>
<keyword id="KW-0030">Aminoacyl-tRNA synthetase</keyword>
<keyword id="KW-0067">ATP-binding</keyword>
<keyword id="KW-0963">Cytoplasm</keyword>
<keyword id="KW-0436">Ligase</keyword>
<keyword id="KW-0460">Magnesium</keyword>
<keyword id="KW-0479">Metal-binding</keyword>
<keyword id="KW-0547">Nucleotide-binding</keyword>
<keyword id="KW-0648">Protein biosynthesis</keyword>
<keyword id="KW-1185">Reference proteome</keyword>
<comment type="catalytic activity">
    <reaction evidence="1">
        <text>tRNA(Lys) + L-lysine + ATP = L-lysyl-tRNA(Lys) + AMP + diphosphate</text>
        <dbReference type="Rhea" id="RHEA:20792"/>
        <dbReference type="Rhea" id="RHEA-COMP:9696"/>
        <dbReference type="Rhea" id="RHEA-COMP:9697"/>
        <dbReference type="ChEBI" id="CHEBI:30616"/>
        <dbReference type="ChEBI" id="CHEBI:32551"/>
        <dbReference type="ChEBI" id="CHEBI:33019"/>
        <dbReference type="ChEBI" id="CHEBI:78442"/>
        <dbReference type="ChEBI" id="CHEBI:78529"/>
        <dbReference type="ChEBI" id="CHEBI:456215"/>
        <dbReference type="EC" id="6.1.1.6"/>
    </reaction>
</comment>
<comment type="cofactor">
    <cofactor evidence="1">
        <name>Mg(2+)</name>
        <dbReference type="ChEBI" id="CHEBI:18420"/>
    </cofactor>
    <text evidence="1">Binds 3 Mg(2+) ions per subunit.</text>
</comment>
<comment type="subunit">
    <text evidence="1">Homodimer.</text>
</comment>
<comment type="subcellular location">
    <subcellularLocation>
        <location evidence="1">Cytoplasm</location>
    </subcellularLocation>
</comment>
<comment type="similarity">
    <text evidence="1">Belongs to the class-II aminoacyl-tRNA synthetase family.</text>
</comment>
<feature type="chain" id="PRO_1000012861" description="Lysine--tRNA ligase">
    <location>
        <begin position="1"/>
        <end position="499"/>
    </location>
</feature>
<feature type="binding site" evidence="1">
    <location>
        <position position="403"/>
    </location>
    <ligand>
        <name>Mg(2+)</name>
        <dbReference type="ChEBI" id="CHEBI:18420"/>
        <label>1</label>
    </ligand>
</feature>
<feature type="binding site" evidence="1">
    <location>
        <position position="410"/>
    </location>
    <ligand>
        <name>Mg(2+)</name>
        <dbReference type="ChEBI" id="CHEBI:18420"/>
        <label>1</label>
    </ligand>
</feature>
<feature type="binding site" evidence="1">
    <location>
        <position position="410"/>
    </location>
    <ligand>
        <name>Mg(2+)</name>
        <dbReference type="ChEBI" id="CHEBI:18420"/>
        <label>2</label>
    </ligand>
</feature>